<feature type="chain" id="PRO_0000439919" description="Cyanuric acid amidohydrolase">
    <location>
        <begin position="1"/>
        <end position="351"/>
    </location>
</feature>
<feature type="region of interest" description="RU A" evidence="2">
    <location>
        <begin position="1"/>
        <end position="96"/>
    </location>
</feature>
<feature type="region of interest" description="RU B" evidence="2">
    <location>
        <begin position="103"/>
        <end position="240"/>
    </location>
</feature>
<feature type="region of interest" description="RU C" evidence="2">
    <location>
        <begin position="246"/>
        <end position="351"/>
    </location>
</feature>
<feature type="active site" evidence="2">
    <location>
        <position position="153"/>
    </location>
</feature>
<feature type="active site" description="Nucleophile" evidence="2">
    <location>
        <position position="223"/>
    </location>
</feature>
<feature type="binding site" evidence="2">
    <location>
        <position position="53"/>
    </location>
    <ligand>
        <name>substrate</name>
    </ligand>
</feature>
<feature type="binding site" evidence="2">
    <location>
        <begin position="77"/>
        <end position="78"/>
    </location>
    <ligand>
        <name>substrate</name>
    </ligand>
</feature>
<feature type="binding site" evidence="2">
    <location>
        <position position="185"/>
    </location>
    <ligand>
        <name>substrate</name>
    </ligand>
</feature>
<feature type="binding site" evidence="2">
    <location>
        <begin position="223"/>
        <end position="224"/>
    </location>
    <ligand>
        <name>substrate</name>
    </ligand>
</feature>
<feature type="binding site" evidence="2">
    <location>
        <position position="283"/>
    </location>
    <ligand>
        <name>Mg(2+)</name>
        <dbReference type="ChEBI" id="CHEBI:18420"/>
        <note>structural</note>
    </ligand>
</feature>
<feature type="binding site" evidence="2">
    <location>
        <position position="310"/>
    </location>
    <ligand>
        <name>substrate</name>
    </ligand>
</feature>
<feature type="binding site" evidence="2">
    <location>
        <begin position="329"/>
        <end position="330"/>
    </location>
    <ligand>
        <name>substrate</name>
    </ligand>
</feature>
<feature type="binding site" evidence="2">
    <location>
        <position position="332"/>
    </location>
    <ligand>
        <name>Mg(2+)</name>
        <dbReference type="ChEBI" id="CHEBI:18420"/>
        <note>structural</note>
    </ligand>
</feature>
<feature type="binding site" evidence="2">
    <location>
        <position position="335"/>
    </location>
    <ligand>
        <name>Mg(2+)</name>
        <dbReference type="ChEBI" id="CHEBI:18420"/>
        <note>structural</note>
    </ligand>
</feature>
<feature type="binding site" evidence="2">
    <location>
        <position position="336"/>
    </location>
    <ligand>
        <name>Mg(2+)</name>
        <dbReference type="ChEBI" id="CHEBI:18420"/>
        <note>structural</note>
    </ligand>
</feature>
<feature type="binding site" evidence="2">
    <location>
        <position position="337"/>
    </location>
    <ligand>
        <name>Mg(2+)</name>
        <dbReference type="ChEBI" id="CHEBI:18420"/>
        <note>structural</note>
    </ligand>
</feature>
<feature type="binding site" evidence="2">
    <location>
        <position position="340"/>
    </location>
    <ligand>
        <name>Mg(2+)</name>
        <dbReference type="ChEBI" id="CHEBI:18420"/>
        <note>structural</note>
    </ligand>
</feature>
<feature type="site" description="Important for substrate specificity" evidence="2">
    <location>
        <position position="306"/>
    </location>
</feature>
<comment type="function">
    <text evidence="2 3">Responsible for the hydrolysis of cyanuric acid, an intermediate formed during catabolism of s-triazine based compounds in herbicides such as atrazine and polymers such as melamine. Catalyzes the hydrolytic opening of the s-triazine ring of cyanuric acid (2,4,6-trihydroxy-s-triazine) to yield carbon dioxide and carboxybiuret, which spontaneously decarboxylates to biuret.</text>
</comment>
<comment type="catalytic activity">
    <reaction evidence="2 3">
        <text>cyanurate + H2O = 1-carboxybiuret + H(+)</text>
        <dbReference type="Rhea" id="RHEA:70363"/>
        <dbReference type="ChEBI" id="CHEBI:15377"/>
        <dbReference type="ChEBI" id="CHEBI:15378"/>
        <dbReference type="ChEBI" id="CHEBI:38028"/>
        <dbReference type="ChEBI" id="CHEBI:142864"/>
        <dbReference type="EC" id="3.5.2.15"/>
    </reaction>
</comment>
<comment type="activity regulation">
    <text evidence="1 2">Inhibited by barbituric acid.</text>
</comment>
<comment type="pathway">
    <text evidence="2">Xenobiotic degradation; atrazine degradation; biuret from cyanurate: step 1/1.</text>
</comment>
<comment type="subunit">
    <text evidence="1 2">Homotetramer.</text>
</comment>
<comment type="domain">
    <text evidence="2">The monomer structure is formed from three repeating units (RUs) that share the same structure as one another. The monomer, the active site and substrate all possess threefold rotational symmetry, to the extent that the active site possesses three potential Ser-Lys catalytic dyads. It is possible that any or all of the three active-site serines may act as nucleophile (albeit only one can do so per catalytic cycle).</text>
</comment>
<comment type="similarity">
    <text evidence="2 4">Belongs to the cyclic amide hydrolase (CyAH) family.</text>
</comment>
<organism>
    <name type="scientific">Rhizobium leguminosarum bv. trifolii (strain WSM1325)</name>
    <dbReference type="NCBI Taxonomy" id="395491"/>
    <lineage>
        <taxon>Bacteria</taxon>
        <taxon>Pseudomonadati</taxon>
        <taxon>Pseudomonadota</taxon>
        <taxon>Alphaproteobacteria</taxon>
        <taxon>Hyphomicrobiales</taxon>
        <taxon>Rhizobiaceae</taxon>
        <taxon>Rhizobium/Agrobacterium group</taxon>
        <taxon>Rhizobium</taxon>
    </lineage>
</organism>
<name>CAH_RHILS</name>
<dbReference type="EC" id="3.5.2.15" evidence="2 3"/>
<dbReference type="EMBL" id="CP001627">
    <property type="protein sequence ID" value="ACS61202.1"/>
    <property type="molecule type" value="Genomic_DNA"/>
</dbReference>
<dbReference type="SMR" id="C6BAU4"/>
<dbReference type="KEGG" id="rlg:Rleg_6452"/>
<dbReference type="HOGENOM" id="CLU_808206_0_0_5"/>
<dbReference type="OrthoDB" id="569708at2"/>
<dbReference type="SABIO-RK" id="C6BAU4"/>
<dbReference type="UniPathway" id="UPA00008">
    <property type="reaction ID" value="UER00502"/>
</dbReference>
<dbReference type="Proteomes" id="UP000002256">
    <property type="component" value="Plasmid pR132505"/>
</dbReference>
<dbReference type="GO" id="GO:0018753">
    <property type="term" value="F:cyanuric acid amidohydrolase activity"/>
    <property type="evidence" value="ECO:0007669"/>
    <property type="project" value="UniProtKB-UniRule"/>
</dbReference>
<dbReference type="GO" id="GO:0046872">
    <property type="term" value="F:metal ion binding"/>
    <property type="evidence" value="ECO:0007669"/>
    <property type="project" value="UniProtKB-UniRule"/>
</dbReference>
<dbReference type="GO" id="GO:0019381">
    <property type="term" value="P:atrazine catabolic process"/>
    <property type="evidence" value="ECO:0007669"/>
    <property type="project" value="UniProtKB-UniRule"/>
</dbReference>
<dbReference type="Gene3D" id="3.30.1330.160">
    <property type="entry name" value="Cyanuric acid hydrolase/Barbituras, RU C"/>
    <property type="match status" value="1"/>
</dbReference>
<dbReference type="Gene3D" id="3.30.1330.170">
    <property type="entry name" value="Cyanuric acid hydrolase/Barbiturase, RU A"/>
    <property type="match status" value="1"/>
</dbReference>
<dbReference type="Gene3D" id="3.30.1330.180">
    <property type="entry name" value="Cyanuric acid hydrolase/Barbiturase, RU B"/>
    <property type="match status" value="1"/>
</dbReference>
<dbReference type="HAMAP" id="MF_01989">
    <property type="entry name" value="Cyc_amidohydrol"/>
    <property type="match status" value="1"/>
</dbReference>
<dbReference type="InterPro" id="IPR014086">
    <property type="entry name" value="AtzD/Barbiturase"/>
</dbReference>
<dbReference type="InterPro" id="IPR043008">
    <property type="entry name" value="AtzD/Barbiturase_RUA"/>
</dbReference>
<dbReference type="InterPro" id="IPR043006">
    <property type="entry name" value="AtzD/Barbiturase_RUB"/>
</dbReference>
<dbReference type="InterPro" id="IPR043007">
    <property type="entry name" value="AtzD/Barbiturase_RUC"/>
</dbReference>
<dbReference type="NCBIfam" id="TIGR02714">
    <property type="entry name" value="amido_AtzD_TrzD"/>
    <property type="match status" value="1"/>
</dbReference>
<dbReference type="Pfam" id="PF09663">
    <property type="entry name" value="Amido_AtzD_TrzD"/>
    <property type="match status" value="1"/>
</dbReference>
<sequence>MPSLRAHVFRVPADGPDDVAGVEALFASGLQANNVVAVLGKTEGNGCVNDFTRGYATRSFETLFSRYGVDGVSIIMSGGTEGALSPHWTVFARETVETPGERALAIGVSRTPALPPEHLGRREQILLVAEGVKSAMRDAGIDDPADVHFVQIKCPLLTSRRIAEAEAAGRTVATHDTLKSMGLSRGASALGVAVALGEIDATSIGDADICTRFDLFSRCASTSSGGELTDHEIIVLGMSAKWSGPLSIDHAVMLDAIDAHSVRKARERLPENSRLAAVLAKAEPDPSGRIDGRRHTMLDDSDIAGTRHARAFVGGVLAGIFGITDLYVSGGAEHQGPPGGGPVAIIVEKEQ</sequence>
<keyword id="KW-0378">Hydrolase</keyword>
<keyword id="KW-0460">Magnesium</keyword>
<keyword id="KW-0479">Metal-binding</keyword>
<keyword id="KW-0614">Plasmid</keyword>
<reference key="1">
    <citation type="journal article" date="2010" name="Stand. Genomic Sci.">
        <title>Complete genome sequence of Rhizobium leguminosarum bv. trifolii strain WSM1325, an effective microsymbiont of annual Mediterranean clovers.</title>
        <authorList>
            <person name="Reeve W."/>
            <person name="O'Hara G."/>
            <person name="Chain P."/>
            <person name="Ardley J."/>
            <person name="Brau L."/>
            <person name="Nandesena K."/>
            <person name="Tiwari R."/>
            <person name="Copeland A."/>
            <person name="Nolan M."/>
            <person name="Han C."/>
            <person name="Brettin T."/>
            <person name="Land M."/>
            <person name="Ovchinikova G."/>
            <person name="Ivanova N."/>
            <person name="Mavromatis K."/>
            <person name="Markowitz V."/>
            <person name="Kyrpides N."/>
            <person name="Melino V."/>
            <person name="Denton M."/>
            <person name="Yates R."/>
            <person name="Howieson J."/>
        </authorList>
    </citation>
    <scope>NUCLEOTIDE SEQUENCE [LARGE SCALE GENOMIC DNA]</scope>
    <source>
        <strain>WSM1325</strain>
    </source>
</reference>
<reference key="2">
    <citation type="journal article" date="2017" name="Appl. Environ. Microbiol.">
        <title>High resolution X-ray structures of two functionally distinct members of the cyclic amide hydrolase (CyAH) family of Toblerone fold enzymes.</title>
        <authorList>
            <person name="Peat T.S."/>
            <person name="Balotra S."/>
            <person name="Wilding M."/>
            <person name="Hartley C.J."/>
            <person name="Newman J."/>
            <person name="Scott C."/>
        </authorList>
    </citation>
    <scope>FUNCTION</scope>
    <scope>CATALYTIC ACTIVITY</scope>
</reference>
<gene>
    <name type="ordered locus">Rleg_6452</name>
</gene>
<protein>
    <recommendedName>
        <fullName evidence="2">Cyanuric acid amidohydrolase</fullName>
        <shortName evidence="2">CAH</shortName>
        <ecNumber evidence="2 3">3.5.2.15</ecNumber>
    </recommendedName>
</protein>
<accession>C6BAU4</accession>
<proteinExistence type="evidence at protein level"/>
<evidence type="ECO:0000250" key="1">
    <source>
        <dbReference type="UniProtKB" id="P58329"/>
    </source>
</evidence>
<evidence type="ECO:0000255" key="2">
    <source>
        <dbReference type="HAMAP-Rule" id="MF_01989"/>
    </source>
</evidence>
<evidence type="ECO:0000269" key="3">
    <source>
    </source>
</evidence>
<evidence type="ECO:0000305" key="4"/>
<geneLocation type="plasmid">
    <name>pR132505</name>
</geneLocation>